<reference key="1">
    <citation type="submission" date="1999-03" db="EMBL/GenBank/DDBJ databases">
        <title>A MYB transcription factor and a gene similar to MYJ24.1 are encoded in the region between MRN17 and MYJ24.</title>
        <authorList>
            <person name="Kroymann J."/>
            <person name="Schnabelrauch D."/>
            <person name="Mitchell-Olds T."/>
        </authorList>
    </citation>
    <scope>NUCLEOTIDE SEQUENCE [MRNA]</scope>
    <source>
        <strain>cv. Landsberg erecta</strain>
    </source>
</reference>
<reference key="2">
    <citation type="journal article" date="2003" name="Proc. Natl. Acad. Sci. U.S.A.">
        <title>Evolutionary dynamics of an Arabidopsis insect resistance quantitative trait locus.</title>
        <authorList>
            <person name="Kroymann J."/>
            <person name="Donnerhacke S."/>
            <person name="Schnabelrauch D."/>
            <person name="Mitchell-Olds T."/>
        </authorList>
    </citation>
    <scope>NUCLEOTIDE SEQUENCE [MRNA]</scope>
    <scope>VARIANTS</scope>
    <source>
        <strain>cv. Bl-0</strain>
        <strain>cv. Di-G</strain>
        <strain>cv. Ka-0</strain>
        <strain>cv. Landsberg erecta</strain>
        <strain>cv. Lip-0</strain>
        <strain>cv. No-0</strain>
        <strain>cv. Petergof</strain>
        <strain>cv. Sei-0</strain>
        <strain>cv. Sorbo</strain>
        <strain>cv. Tsu-0</strain>
        <strain>cv. Wl-0</strain>
    </source>
</reference>
<reference key="3">
    <citation type="journal article" date="2006" name="Proc. Natl. Acad. Sci. U.S.A.">
        <title>Positive selection driving diversification in plant secondary metabolism.</title>
        <authorList>
            <person name="Benderoth M."/>
            <person name="Textor S."/>
            <person name="Windsor A.J."/>
            <person name="Mitchell-Olds T."/>
            <person name="Gershenzon J."/>
            <person name="Kroymann J."/>
        </authorList>
    </citation>
    <scope>NUCLEOTIDE SEQUENCE [GENOMIC DNA]</scope>
    <scope>VARIANTS</scope>
    <scope>FUNCTION</scope>
    <source>
        <strain>cv. Landsberg erecta</strain>
        <strain>cv. Sorbo</strain>
    </source>
</reference>
<reference key="4">
    <citation type="journal article" date="2007" name="Plant Physiol.">
        <title>MAM3 catalyzes the formation of all aliphatic glucosinolate chain lengths in Arabidopsis.</title>
        <authorList>
            <person name="Textor S."/>
            <person name="de Kraker J.-W."/>
            <person name="Hause B."/>
            <person name="Gershenzon J."/>
            <person name="Tokuhisa J.G."/>
        </authorList>
    </citation>
    <scope>NOMENCLATURE</scope>
</reference>
<proteinExistence type="evidence at transcript level"/>
<comment type="function">
    <text evidence="4">Catalyzes only the first methionine chain elongation cycle.</text>
</comment>
<comment type="catalytic activity">
    <reaction evidence="1">
        <text>an omega-(methylsulfanyl)-2-oxoalkanoate + acetyl-CoA + H2O = a 2-(omega-methylsulfanyl)alkylmalate + CoA + H(+)</text>
        <dbReference type="Rhea" id="RHEA:50624"/>
        <dbReference type="Rhea" id="RHEA-COMP:12823"/>
        <dbReference type="Rhea" id="RHEA-COMP:12824"/>
        <dbReference type="ChEBI" id="CHEBI:15377"/>
        <dbReference type="ChEBI" id="CHEBI:15378"/>
        <dbReference type="ChEBI" id="CHEBI:57287"/>
        <dbReference type="ChEBI" id="CHEBI:57288"/>
        <dbReference type="ChEBI" id="CHEBI:133493"/>
        <dbReference type="ChEBI" id="CHEBI:133494"/>
        <dbReference type="EC" id="2.3.3.17"/>
    </reaction>
</comment>
<comment type="subcellular location">
    <subcellularLocation>
        <location evidence="5">Plastid</location>
        <location evidence="5">Chloroplast</location>
    </subcellularLocation>
</comment>
<comment type="domain">
    <text>The N-terminal part of the protein controls substrate specificity.</text>
</comment>
<comment type="miscellaneous">
    <text>The gene encoding this protein is not present in cv. Aa-0, cv. Ag-0, cv. Columbia, cv. Ema-1, cv. Gy-0, cv. Mt-0 and cv. Pla-0.</text>
</comment>
<comment type="similarity">
    <text evidence="5">Belongs to the alpha-IPM synthase/homocitrate synthase family.</text>
</comment>
<sequence>MASSLLTSSGMIPTTGSTVVGRSVLPFQSSLHSLRLTHSYKNPALFISCCSSVSKNAATSSTDLKPAVERWPEYLPNKLPDENYVRVFDTTLRDGEQAPGGSLTPPQKLEIARQLAKLRVDIMEVGFPGSSEEELETVKTIAKTVGNEVDEETGYVPVICAIARSKHRDIEAAWEAVKYAKRPRILIFTSTSDIHMKYKLKKTQEEVIEMAVSSIRFAKSLGFNDIQLGCEDGGRSDKDFLCKILGEAIKADVTVVNVADTVGINMPHEYAELVTYLKANTPGIDDVVFSVHCHNDLGLATANSIAGIRAGARQVEVTINGIGERSGNASLEEVVMALKCRGAYVINGVYTRIDTRQIMATSKMVQEYTGLYVQAHKPIVGANCFVHESGIHQDGILKNRSTYEILSPEDIGIVKSQNSGLVLGKLSGRHAVKDRLKELGYELDDEKLNAVFSLFRDLTKNKKRITDADMKALVTSSDGISLEKSNGANGLKSNGYIPVLQVSSNV</sequence>
<name>MAM2_ARATH</name>
<organism>
    <name type="scientific">Arabidopsis thaliana</name>
    <name type="common">Mouse-ear cress</name>
    <dbReference type="NCBI Taxonomy" id="3702"/>
    <lineage>
        <taxon>Eukaryota</taxon>
        <taxon>Viridiplantae</taxon>
        <taxon>Streptophyta</taxon>
        <taxon>Embryophyta</taxon>
        <taxon>Tracheophyta</taxon>
        <taxon>Spermatophyta</taxon>
        <taxon>Magnoliopsida</taxon>
        <taxon>eudicotyledons</taxon>
        <taxon>Gunneridae</taxon>
        <taxon>Pentapetalae</taxon>
        <taxon>rosids</taxon>
        <taxon>malvids</taxon>
        <taxon>Brassicales</taxon>
        <taxon>Brassicaceae</taxon>
        <taxon>Camelineae</taxon>
        <taxon>Arabidopsis</taxon>
    </lineage>
</organism>
<feature type="transit peptide" description="Chloroplast" evidence="2">
    <location>
        <begin position="1"/>
        <end position="49"/>
    </location>
</feature>
<feature type="chain" id="PRO_5000064969" description="Methylthioalkylmalate synthase 2, chloroplastic">
    <location>
        <begin position="50"/>
        <end position="506"/>
    </location>
</feature>
<feature type="domain" description="Pyruvate carboxyltransferase" evidence="3">
    <location>
        <begin position="85"/>
        <end position="359"/>
    </location>
</feature>
<feature type="sequence variant" description="In strain: cv. Ka-0, cv. Lip-0, cv. No-0, cv. Sei-0, cv. Tsu-0 and cv. Wl-0.">
    <original>A</original>
    <variation>V</variation>
    <location>
        <position position="67"/>
    </location>
</feature>
<feature type="sequence variant" description="In strain: cv. Ka-0, cv. Lip-0, cv. No-0, cv. Sei-0, cv. Tsu-0 and cv. Wl-0.">
    <original>L</original>
    <variation>I</variation>
    <location>
        <position position="75"/>
    </location>
</feature>
<feature type="sequence variant" description="In strain: cv. Ka-0, cv. Lip-0, cv. No-0, cv. Sei-0, cv. Tsu-0 and cv. Wl-0.">
    <original>R</original>
    <variation>H</variation>
    <location>
        <position position="86"/>
    </location>
</feature>
<feature type="sequence variant" description="In strain: cv. Sorbo.">
    <original>L</original>
    <variation>Q</variation>
    <location>
        <position position="109"/>
    </location>
</feature>
<feature type="sequence variant" description="In strain: cv. Bl-0, cv. Ka-0, cv. Lip-0, cv. No-0, cv. Sei-0, cv. Sorbo, cv. Tsu-0 and cv. Wl-0.">
    <original>D</original>
    <variation>G</variation>
    <location>
        <position position="252"/>
    </location>
</feature>
<feature type="sequence variant" description="In strain: cv. Ka-0, cv. Lip-0, cv. No-0, cv. Sei-0, cv. Tsu-0 and cv. Wl-0.">
    <original>A</original>
    <variation>V</variation>
    <location>
        <position position="450"/>
    </location>
</feature>
<feature type="sequence variant" description="In strain: cv. Ka-0, cv. Lip-0, cv. No-0, cv. Sei-0, cv. Tsu-0 and cv. Wl-0.">
    <original>M</original>
    <variation>L</variation>
    <location>
        <position position="470"/>
    </location>
</feature>
<feature type="sequence variant" description="In strain: cv. Ka-0, cv. Lip-0, cv. No-0, cv. Sei-0, cv. Tsu-0 and cv. Wl-0.">
    <original>G</original>
    <variation>E</variation>
    <location>
        <position position="479"/>
    </location>
</feature>
<feature type="sequence variant" description="In strain: cv. Ka-0, cv. Lip-0, cv. No-0, cv. Sei-0, cv. Tsu-0 and cv. Wl-0.">
    <original>S</original>
    <variation>L</variation>
    <location>
        <position position="485"/>
    </location>
</feature>
<dbReference type="EC" id="2.3.3.17" evidence="1"/>
<dbReference type="EMBL" id="AJ133892">
    <property type="protein sequence ID" value="CAC80207.1"/>
    <property type="molecule type" value="mRNA"/>
</dbReference>
<dbReference type="EMBL" id="AJ486889">
    <property type="protein sequence ID" value="CAD31147.1"/>
    <property type="molecule type" value="mRNA"/>
</dbReference>
<dbReference type="EMBL" id="AJ486890">
    <property type="protein sequence ID" value="CAD31148.1"/>
    <property type="molecule type" value="mRNA"/>
</dbReference>
<dbReference type="EMBL" id="AJ486891">
    <property type="protein sequence ID" value="CAD31149.1"/>
    <property type="molecule type" value="mRNA"/>
</dbReference>
<dbReference type="EMBL" id="AJ486892">
    <property type="protein sequence ID" value="CAD31150.1"/>
    <property type="molecule type" value="mRNA"/>
</dbReference>
<dbReference type="EMBL" id="AJ486893">
    <property type="protein sequence ID" value="CAD31151.1"/>
    <property type="molecule type" value="mRNA"/>
</dbReference>
<dbReference type="EMBL" id="AJ486894">
    <property type="protein sequence ID" value="CAD31152.1"/>
    <property type="molecule type" value="mRNA"/>
</dbReference>
<dbReference type="EMBL" id="AJ486895">
    <property type="protein sequence ID" value="CAD31153.1"/>
    <property type="molecule type" value="mRNA"/>
</dbReference>
<dbReference type="EMBL" id="AJ486896">
    <property type="protein sequence ID" value="CAD31154.1"/>
    <property type="molecule type" value="mRNA"/>
</dbReference>
<dbReference type="EMBL" id="AJ486897">
    <property type="protein sequence ID" value="CAD31155.1"/>
    <property type="molecule type" value="mRNA"/>
</dbReference>
<dbReference type="EMBL" id="AJ486898">
    <property type="protein sequence ID" value="CAD31156.1"/>
    <property type="molecule type" value="mRNA"/>
</dbReference>
<dbReference type="EMBL" id="AJ486899">
    <property type="protein sequence ID" value="CAD31157.1"/>
    <property type="molecule type" value="mRNA"/>
</dbReference>
<dbReference type="EMBL" id="AM180571">
    <property type="protein sequence ID" value="CAJ55503.1"/>
    <property type="molecule type" value="Genomic_DNA"/>
</dbReference>
<dbReference type="EMBL" id="AM180569">
    <property type="protein sequence ID" value="CAJ55501.1"/>
    <property type="molecule type" value="Genomic_DNA"/>
</dbReference>
<dbReference type="SMR" id="Q8VX04"/>
<dbReference type="BioCyc" id="ARA:MAM2-MONOMER"/>
<dbReference type="BRENDA" id="2.3.3.17">
    <property type="organism ID" value="399"/>
</dbReference>
<dbReference type="PRO" id="PR:Q8VX04"/>
<dbReference type="ExpressionAtlas" id="Q8VX04">
    <property type="expression patterns" value="baseline and differential"/>
</dbReference>
<dbReference type="GO" id="GO:0009507">
    <property type="term" value="C:chloroplast"/>
    <property type="evidence" value="ECO:0007669"/>
    <property type="project" value="UniProtKB-SubCell"/>
</dbReference>
<dbReference type="GO" id="GO:0010177">
    <property type="term" value="F:methylthioalkylmalate synthase activity"/>
    <property type="evidence" value="ECO:0007669"/>
    <property type="project" value="UniProtKB-EC"/>
</dbReference>
<dbReference type="GO" id="GO:0009058">
    <property type="term" value="P:biosynthetic process"/>
    <property type="evidence" value="ECO:0007669"/>
    <property type="project" value="UniProtKB-ARBA"/>
</dbReference>
<dbReference type="GO" id="GO:0019752">
    <property type="term" value="P:carboxylic acid metabolic process"/>
    <property type="evidence" value="ECO:0007669"/>
    <property type="project" value="InterPro"/>
</dbReference>
<dbReference type="CDD" id="cd07940">
    <property type="entry name" value="DRE_TIM_IPMS"/>
    <property type="match status" value="1"/>
</dbReference>
<dbReference type="FunFam" id="1.10.238.260:FF:000001">
    <property type="entry name" value="2-isopropylmalate synthase"/>
    <property type="match status" value="1"/>
</dbReference>
<dbReference type="FunFam" id="3.20.20.70:FF:000010">
    <property type="entry name" value="2-isopropylmalate synthase"/>
    <property type="match status" value="1"/>
</dbReference>
<dbReference type="Gene3D" id="1.10.238.260">
    <property type="match status" value="1"/>
</dbReference>
<dbReference type="Gene3D" id="3.20.20.70">
    <property type="entry name" value="Aldolase class I"/>
    <property type="match status" value="1"/>
</dbReference>
<dbReference type="InterPro" id="IPR050073">
    <property type="entry name" value="2-IPM_HCS-like"/>
</dbReference>
<dbReference type="InterPro" id="IPR002034">
    <property type="entry name" value="AIPM/Hcit_synth_CS"/>
</dbReference>
<dbReference type="InterPro" id="IPR013785">
    <property type="entry name" value="Aldolase_TIM"/>
</dbReference>
<dbReference type="InterPro" id="IPR054691">
    <property type="entry name" value="LeuA/HCS_post-cat"/>
</dbReference>
<dbReference type="InterPro" id="IPR000891">
    <property type="entry name" value="PYR_CT"/>
</dbReference>
<dbReference type="NCBIfam" id="NF002086">
    <property type="entry name" value="PRK00915.1-3"/>
    <property type="match status" value="1"/>
</dbReference>
<dbReference type="PANTHER" id="PTHR10277">
    <property type="entry name" value="HOMOCITRATE SYNTHASE-RELATED"/>
    <property type="match status" value="1"/>
</dbReference>
<dbReference type="PANTHER" id="PTHR10277:SF60">
    <property type="entry name" value="METHYLTHIOALKYLMALATE SYNTHASE 1, CHLOROPLASTIC-RELATED"/>
    <property type="match status" value="1"/>
</dbReference>
<dbReference type="Pfam" id="PF22617">
    <property type="entry name" value="HCS_D2"/>
    <property type="match status" value="1"/>
</dbReference>
<dbReference type="Pfam" id="PF00682">
    <property type="entry name" value="HMGL-like"/>
    <property type="match status" value="1"/>
</dbReference>
<dbReference type="SUPFAM" id="SSF51569">
    <property type="entry name" value="Aldolase"/>
    <property type="match status" value="1"/>
</dbReference>
<dbReference type="PROSITE" id="PS00815">
    <property type="entry name" value="AIPM_HOMOCIT_SYNTH_1"/>
    <property type="match status" value="1"/>
</dbReference>
<dbReference type="PROSITE" id="PS00816">
    <property type="entry name" value="AIPM_HOMOCIT_SYNTH_2"/>
    <property type="match status" value="1"/>
</dbReference>
<dbReference type="PROSITE" id="PS50991">
    <property type="entry name" value="PYR_CT"/>
    <property type="match status" value="1"/>
</dbReference>
<gene>
    <name type="primary">MAM2</name>
</gene>
<protein>
    <recommendedName>
        <fullName>Methylthioalkylmalate synthase 2, chloroplastic</fullName>
        <ecNumber evidence="1">2.3.3.17</ecNumber>
    </recommendedName>
</protein>
<accession>Q8VX04</accession>
<accession>Q70YW3</accession>
<accession>Q70YW8</accession>
<accession>Q70YX0</accession>
<keyword id="KW-0150">Chloroplast</keyword>
<keyword id="KW-0934">Plastid</keyword>
<keyword id="KW-0808">Transferase</keyword>
<keyword id="KW-0809">Transit peptide</keyword>
<evidence type="ECO:0000250" key="1">
    <source>
        <dbReference type="UniProtKB" id="Q9FG67"/>
    </source>
</evidence>
<evidence type="ECO:0000255" key="2"/>
<evidence type="ECO:0000255" key="3">
    <source>
        <dbReference type="PROSITE-ProRule" id="PRU01151"/>
    </source>
</evidence>
<evidence type="ECO:0000269" key="4">
    <source>
    </source>
</evidence>
<evidence type="ECO:0000305" key="5"/>